<accession>P0DC35</accession>
<accession>Q8K5H5</accession>
<protein>
    <recommendedName>
        <fullName evidence="1">tRNA-specific 2-thiouridylase MnmA</fullName>
        <ecNumber evidence="1">2.8.1.13</ecNumber>
    </recommendedName>
</protein>
<dbReference type="EC" id="2.8.1.13" evidence="1"/>
<dbReference type="EMBL" id="BA000034">
    <property type="protein sequence ID" value="BAC64931.1"/>
    <property type="molecule type" value="Genomic_DNA"/>
</dbReference>
<dbReference type="RefSeq" id="WP_011055107.1">
    <property type="nucleotide sequence ID" value="NC_004606.1"/>
</dbReference>
<dbReference type="SMR" id="P0DC35"/>
<dbReference type="KEGG" id="sps:SPs1836"/>
<dbReference type="HOGENOM" id="CLU_035188_1_0_9"/>
<dbReference type="GO" id="GO:0005737">
    <property type="term" value="C:cytoplasm"/>
    <property type="evidence" value="ECO:0007669"/>
    <property type="project" value="UniProtKB-SubCell"/>
</dbReference>
<dbReference type="GO" id="GO:0005524">
    <property type="term" value="F:ATP binding"/>
    <property type="evidence" value="ECO:0007669"/>
    <property type="project" value="UniProtKB-KW"/>
</dbReference>
<dbReference type="GO" id="GO:0000049">
    <property type="term" value="F:tRNA binding"/>
    <property type="evidence" value="ECO:0007669"/>
    <property type="project" value="UniProtKB-KW"/>
</dbReference>
<dbReference type="GO" id="GO:0103016">
    <property type="term" value="F:tRNA-uridine 2-sulfurtransferase activity"/>
    <property type="evidence" value="ECO:0007669"/>
    <property type="project" value="UniProtKB-EC"/>
</dbReference>
<dbReference type="GO" id="GO:0002143">
    <property type="term" value="P:tRNA wobble position uridine thiolation"/>
    <property type="evidence" value="ECO:0007669"/>
    <property type="project" value="TreeGrafter"/>
</dbReference>
<dbReference type="CDD" id="cd01998">
    <property type="entry name" value="MnmA_TRMU-like"/>
    <property type="match status" value="1"/>
</dbReference>
<dbReference type="FunFam" id="2.30.30.280:FF:000001">
    <property type="entry name" value="tRNA-specific 2-thiouridylase MnmA"/>
    <property type="match status" value="1"/>
</dbReference>
<dbReference type="FunFam" id="2.40.30.10:FF:000023">
    <property type="entry name" value="tRNA-specific 2-thiouridylase MnmA"/>
    <property type="match status" value="1"/>
</dbReference>
<dbReference type="FunFam" id="3.40.50.620:FF:000004">
    <property type="entry name" value="tRNA-specific 2-thiouridylase MnmA"/>
    <property type="match status" value="1"/>
</dbReference>
<dbReference type="Gene3D" id="2.30.30.280">
    <property type="entry name" value="Adenine nucleotide alpha hydrolases-like domains"/>
    <property type="match status" value="1"/>
</dbReference>
<dbReference type="Gene3D" id="3.40.50.620">
    <property type="entry name" value="HUPs"/>
    <property type="match status" value="1"/>
</dbReference>
<dbReference type="Gene3D" id="2.40.30.10">
    <property type="entry name" value="Translation factors"/>
    <property type="match status" value="1"/>
</dbReference>
<dbReference type="HAMAP" id="MF_00144">
    <property type="entry name" value="tRNA_thiouridyl_MnmA"/>
    <property type="match status" value="1"/>
</dbReference>
<dbReference type="InterPro" id="IPR004506">
    <property type="entry name" value="MnmA-like"/>
</dbReference>
<dbReference type="InterPro" id="IPR046885">
    <property type="entry name" value="MnmA-like_C"/>
</dbReference>
<dbReference type="InterPro" id="IPR046884">
    <property type="entry name" value="MnmA-like_central"/>
</dbReference>
<dbReference type="InterPro" id="IPR023382">
    <property type="entry name" value="MnmA-like_central_sf"/>
</dbReference>
<dbReference type="InterPro" id="IPR014729">
    <property type="entry name" value="Rossmann-like_a/b/a_fold"/>
</dbReference>
<dbReference type="NCBIfam" id="NF001138">
    <property type="entry name" value="PRK00143.1"/>
    <property type="match status" value="1"/>
</dbReference>
<dbReference type="NCBIfam" id="TIGR00420">
    <property type="entry name" value="trmU"/>
    <property type="match status" value="1"/>
</dbReference>
<dbReference type="PANTHER" id="PTHR11933:SF5">
    <property type="entry name" value="MITOCHONDRIAL TRNA-SPECIFIC 2-THIOURIDYLASE 1"/>
    <property type="match status" value="1"/>
</dbReference>
<dbReference type="PANTHER" id="PTHR11933">
    <property type="entry name" value="TRNA 5-METHYLAMINOMETHYL-2-THIOURIDYLATE -METHYLTRANSFERASE"/>
    <property type="match status" value="1"/>
</dbReference>
<dbReference type="Pfam" id="PF03054">
    <property type="entry name" value="tRNA_Me_trans"/>
    <property type="match status" value="1"/>
</dbReference>
<dbReference type="Pfam" id="PF20258">
    <property type="entry name" value="tRNA_Me_trans_C"/>
    <property type="match status" value="1"/>
</dbReference>
<dbReference type="Pfam" id="PF20259">
    <property type="entry name" value="tRNA_Me_trans_M"/>
    <property type="match status" value="1"/>
</dbReference>
<dbReference type="SUPFAM" id="SSF52402">
    <property type="entry name" value="Adenine nucleotide alpha hydrolases-like"/>
    <property type="match status" value="1"/>
</dbReference>
<proteinExistence type="inferred from homology"/>
<name>MNMA_STRPQ</name>
<feature type="chain" id="PRO_0000411405" description="tRNA-specific 2-thiouridylase MnmA">
    <location>
        <begin position="1"/>
        <end position="373"/>
    </location>
</feature>
<feature type="region of interest" description="Interaction with target base in tRNA" evidence="1">
    <location>
        <begin position="98"/>
        <end position="100"/>
    </location>
</feature>
<feature type="region of interest" description="Interaction with tRNA" evidence="1">
    <location>
        <begin position="150"/>
        <end position="152"/>
    </location>
</feature>
<feature type="region of interest" description="Interaction with tRNA" evidence="1">
    <location>
        <begin position="312"/>
        <end position="313"/>
    </location>
</feature>
<feature type="active site" description="Nucleophile" evidence="1">
    <location>
        <position position="103"/>
    </location>
</feature>
<feature type="active site" description="Cysteine persulfide intermediate" evidence="1">
    <location>
        <position position="200"/>
    </location>
</feature>
<feature type="binding site" evidence="1">
    <location>
        <begin position="12"/>
        <end position="19"/>
    </location>
    <ligand>
        <name>ATP</name>
        <dbReference type="ChEBI" id="CHEBI:30616"/>
    </ligand>
</feature>
<feature type="binding site" evidence="1">
    <location>
        <position position="38"/>
    </location>
    <ligand>
        <name>ATP</name>
        <dbReference type="ChEBI" id="CHEBI:30616"/>
    </ligand>
</feature>
<feature type="binding site" evidence="1">
    <location>
        <position position="127"/>
    </location>
    <ligand>
        <name>ATP</name>
        <dbReference type="ChEBI" id="CHEBI:30616"/>
    </ligand>
</feature>
<feature type="site" description="Interaction with tRNA" evidence="1">
    <location>
        <position position="128"/>
    </location>
</feature>
<feature type="site" description="Interaction with tRNA" evidence="1">
    <location>
        <position position="344"/>
    </location>
</feature>
<feature type="disulfide bond" description="Alternate" evidence="1">
    <location>
        <begin position="103"/>
        <end position="200"/>
    </location>
</feature>
<sequence>MTDNSKICVVVGMSGGVDSSVTALLLKEQGYDVIGVFMKNWHDTDEFGVCTATEDYKDVAAVADQIGIPYYSVNFEKEYWDRVFEYFLAEYRAGRTPNPDVMCNKEIKFKAFLDYAMTLGADYVATGHYAQVKRDENGTVHMLRGADNGKDQTYFLSQLSQEQLQKTLFPLGHLQKSEVREIAERAGLATAKKKDSTGICFIGEKNFKQFLSQYLPAQKGRMMTIDGRDMGEHAGLMYYTIGQRGGLGIGGQHGGDNQPWFVVGKDLSQNILYVGQGFYHEALMSNSLDASVIHFTREMPEEFTFECTAKFRYRQPDSHVRVHVRGDKAEVVFAEPQRAITPGQAVVFYDGKECLGGGMIDMAYKNGQPCQYI</sequence>
<organism>
    <name type="scientific">Streptococcus pyogenes serotype M3 (strain SSI-1)</name>
    <dbReference type="NCBI Taxonomy" id="193567"/>
    <lineage>
        <taxon>Bacteria</taxon>
        <taxon>Bacillati</taxon>
        <taxon>Bacillota</taxon>
        <taxon>Bacilli</taxon>
        <taxon>Lactobacillales</taxon>
        <taxon>Streptococcaceae</taxon>
        <taxon>Streptococcus</taxon>
    </lineage>
</organism>
<gene>
    <name evidence="1" type="primary">mnmA</name>
    <name type="synonym">trmU</name>
    <name type="ordered locus">SPs1836</name>
</gene>
<keyword id="KW-0067">ATP-binding</keyword>
<keyword id="KW-0963">Cytoplasm</keyword>
<keyword id="KW-1015">Disulfide bond</keyword>
<keyword id="KW-0547">Nucleotide-binding</keyword>
<keyword id="KW-0694">RNA-binding</keyword>
<keyword id="KW-0808">Transferase</keyword>
<keyword id="KW-0819">tRNA processing</keyword>
<keyword id="KW-0820">tRNA-binding</keyword>
<reference key="1">
    <citation type="journal article" date="2003" name="Genome Res.">
        <title>Genome sequence of an M3 strain of Streptococcus pyogenes reveals a large-scale genomic rearrangement in invasive strains and new insights into phage evolution.</title>
        <authorList>
            <person name="Nakagawa I."/>
            <person name="Kurokawa K."/>
            <person name="Yamashita A."/>
            <person name="Nakata M."/>
            <person name="Tomiyasu Y."/>
            <person name="Okahashi N."/>
            <person name="Kawabata S."/>
            <person name="Yamazaki K."/>
            <person name="Shiba T."/>
            <person name="Yasunaga T."/>
            <person name="Hayashi H."/>
            <person name="Hattori M."/>
            <person name="Hamada S."/>
        </authorList>
    </citation>
    <scope>NUCLEOTIDE SEQUENCE [LARGE SCALE GENOMIC DNA]</scope>
    <source>
        <strain>SSI-1</strain>
    </source>
</reference>
<evidence type="ECO:0000255" key="1">
    <source>
        <dbReference type="HAMAP-Rule" id="MF_00144"/>
    </source>
</evidence>
<comment type="function">
    <text evidence="1">Catalyzes the 2-thiolation of uridine at the wobble position (U34) of tRNA, leading to the formation of s(2)U34.</text>
</comment>
<comment type="catalytic activity">
    <reaction evidence="1">
        <text>S-sulfanyl-L-cysteinyl-[protein] + uridine(34) in tRNA + AH2 + ATP = 2-thiouridine(34) in tRNA + L-cysteinyl-[protein] + A + AMP + diphosphate + H(+)</text>
        <dbReference type="Rhea" id="RHEA:47032"/>
        <dbReference type="Rhea" id="RHEA-COMP:10131"/>
        <dbReference type="Rhea" id="RHEA-COMP:11726"/>
        <dbReference type="Rhea" id="RHEA-COMP:11727"/>
        <dbReference type="Rhea" id="RHEA-COMP:11728"/>
        <dbReference type="ChEBI" id="CHEBI:13193"/>
        <dbReference type="ChEBI" id="CHEBI:15378"/>
        <dbReference type="ChEBI" id="CHEBI:17499"/>
        <dbReference type="ChEBI" id="CHEBI:29950"/>
        <dbReference type="ChEBI" id="CHEBI:30616"/>
        <dbReference type="ChEBI" id="CHEBI:33019"/>
        <dbReference type="ChEBI" id="CHEBI:61963"/>
        <dbReference type="ChEBI" id="CHEBI:65315"/>
        <dbReference type="ChEBI" id="CHEBI:87170"/>
        <dbReference type="ChEBI" id="CHEBI:456215"/>
        <dbReference type="EC" id="2.8.1.13"/>
    </reaction>
</comment>
<comment type="subcellular location">
    <subcellularLocation>
        <location evidence="1">Cytoplasm</location>
    </subcellularLocation>
</comment>
<comment type="similarity">
    <text evidence="1">Belongs to the MnmA/TRMU family.</text>
</comment>